<gene>
    <name evidence="1" type="primary">thyA</name>
    <name type="ordered locus">RSc0947</name>
    <name type="ORF">RS04447</name>
</gene>
<reference key="1">
    <citation type="journal article" date="2002" name="Nature">
        <title>Genome sequence of the plant pathogen Ralstonia solanacearum.</title>
        <authorList>
            <person name="Salanoubat M."/>
            <person name="Genin S."/>
            <person name="Artiguenave F."/>
            <person name="Gouzy J."/>
            <person name="Mangenot S."/>
            <person name="Arlat M."/>
            <person name="Billault A."/>
            <person name="Brottier P."/>
            <person name="Camus J.-C."/>
            <person name="Cattolico L."/>
            <person name="Chandler M."/>
            <person name="Choisne N."/>
            <person name="Claudel-Renard C."/>
            <person name="Cunnac S."/>
            <person name="Demange N."/>
            <person name="Gaspin C."/>
            <person name="Lavie M."/>
            <person name="Moisan A."/>
            <person name="Robert C."/>
            <person name="Saurin W."/>
            <person name="Schiex T."/>
            <person name="Siguier P."/>
            <person name="Thebault P."/>
            <person name="Whalen M."/>
            <person name="Wincker P."/>
            <person name="Levy M."/>
            <person name="Weissenbach J."/>
            <person name="Boucher C.A."/>
        </authorList>
    </citation>
    <scope>NUCLEOTIDE SEQUENCE [LARGE SCALE GENOMIC DNA]</scope>
    <source>
        <strain>ATCC BAA-1114 / GMI1000</strain>
    </source>
</reference>
<comment type="function">
    <text evidence="1">Catalyzes the reductive methylation of 2'-deoxyuridine-5'-monophosphate (dUMP) to 2'-deoxythymidine-5'-monophosphate (dTMP) while utilizing 5,10-methylenetetrahydrofolate (mTHF) as the methyl donor and reductant in the reaction, yielding dihydrofolate (DHF) as a by-product. This enzymatic reaction provides an intracellular de novo source of dTMP, an essential precursor for DNA biosynthesis.</text>
</comment>
<comment type="catalytic activity">
    <reaction evidence="1">
        <text>dUMP + (6R)-5,10-methylene-5,6,7,8-tetrahydrofolate = 7,8-dihydrofolate + dTMP</text>
        <dbReference type="Rhea" id="RHEA:12104"/>
        <dbReference type="ChEBI" id="CHEBI:15636"/>
        <dbReference type="ChEBI" id="CHEBI:57451"/>
        <dbReference type="ChEBI" id="CHEBI:63528"/>
        <dbReference type="ChEBI" id="CHEBI:246422"/>
        <dbReference type="EC" id="2.1.1.45"/>
    </reaction>
</comment>
<comment type="pathway">
    <text evidence="1">Pyrimidine metabolism; dTTP biosynthesis.</text>
</comment>
<comment type="subunit">
    <text evidence="1">Homodimer.</text>
</comment>
<comment type="subcellular location">
    <subcellularLocation>
        <location evidence="1">Cytoplasm</location>
    </subcellularLocation>
</comment>
<comment type="similarity">
    <text evidence="1">Belongs to the thymidylate synthase family. Bacterial-type ThyA subfamily.</text>
</comment>
<keyword id="KW-0963">Cytoplasm</keyword>
<keyword id="KW-0489">Methyltransferase</keyword>
<keyword id="KW-0545">Nucleotide biosynthesis</keyword>
<keyword id="KW-1185">Reference proteome</keyword>
<keyword id="KW-0808">Transferase</keyword>
<accession>Q8Y0U6</accession>
<feature type="chain" id="PRO_0000141007" description="Thymidylate synthase">
    <location>
        <begin position="1"/>
        <end position="264"/>
    </location>
</feature>
<feature type="active site" description="Nucleophile" evidence="1">
    <location>
        <position position="146"/>
    </location>
</feature>
<feature type="binding site" description="in other chain" evidence="1">
    <location>
        <position position="21"/>
    </location>
    <ligand>
        <name>dUMP</name>
        <dbReference type="ChEBI" id="CHEBI:246422"/>
        <note>ligand shared between dimeric partners</note>
    </ligand>
</feature>
<feature type="binding site" evidence="1">
    <location>
        <position position="51"/>
    </location>
    <ligand>
        <name>(6R)-5,10-methylene-5,6,7,8-tetrahydrofolate</name>
        <dbReference type="ChEBI" id="CHEBI:15636"/>
    </ligand>
</feature>
<feature type="binding site" evidence="1">
    <location>
        <begin position="126"/>
        <end position="127"/>
    </location>
    <ligand>
        <name>dUMP</name>
        <dbReference type="ChEBI" id="CHEBI:246422"/>
        <note>ligand shared between dimeric partners</note>
    </ligand>
</feature>
<feature type="binding site" description="in other chain" evidence="1">
    <location>
        <begin position="166"/>
        <end position="169"/>
    </location>
    <ligand>
        <name>dUMP</name>
        <dbReference type="ChEBI" id="CHEBI:246422"/>
        <note>ligand shared between dimeric partners</note>
    </ligand>
</feature>
<feature type="binding site" evidence="1">
    <location>
        <position position="169"/>
    </location>
    <ligand>
        <name>(6R)-5,10-methylene-5,6,7,8-tetrahydrofolate</name>
        <dbReference type="ChEBI" id="CHEBI:15636"/>
    </ligand>
</feature>
<feature type="binding site" description="in other chain" evidence="1">
    <location>
        <position position="177"/>
    </location>
    <ligand>
        <name>dUMP</name>
        <dbReference type="ChEBI" id="CHEBI:246422"/>
        <note>ligand shared between dimeric partners</note>
    </ligand>
</feature>
<feature type="binding site" description="in other chain" evidence="1">
    <location>
        <begin position="207"/>
        <end position="209"/>
    </location>
    <ligand>
        <name>dUMP</name>
        <dbReference type="ChEBI" id="CHEBI:246422"/>
        <note>ligand shared between dimeric partners</note>
    </ligand>
</feature>
<feature type="binding site" evidence="1">
    <location>
        <position position="263"/>
    </location>
    <ligand>
        <name>(6R)-5,10-methylene-5,6,7,8-tetrahydrofolate</name>
        <dbReference type="ChEBI" id="CHEBI:15636"/>
    </ligand>
</feature>
<evidence type="ECO:0000255" key="1">
    <source>
        <dbReference type="HAMAP-Rule" id="MF_00008"/>
    </source>
</evidence>
<organism>
    <name type="scientific">Ralstonia nicotianae (strain ATCC BAA-1114 / GMI1000)</name>
    <name type="common">Ralstonia solanacearum</name>
    <dbReference type="NCBI Taxonomy" id="267608"/>
    <lineage>
        <taxon>Bacteria</taxon>
        <taxon>Pseudomonadati</taxon>
        <taxon>Pseudomonadota</taxon>
        <taxon>Betaproteobacteria</taxon>
        <taxon>Burkholderiales</taxon>
        <taxon>Burkholderiaceae</taxon>
        <taxon>Ralstonia</taxon>
        <taxon>Ralstonia solanacearum species complex</taxon>
    </lineage>
</organism>
<proteinExistence type="inferred from homology"/>
<sequence length="264" mass="30381">MQPYLDLMRHVHEHGTDKADRTGTGTRSVFGHQMRFDLQQGFPLVTTKKVHIKSIVYELLWFLQGATNVRWLRENGVTIWDEWADAEGELGPIYGYQWRSWPTPSGEHIDQIAELIAQIKRNPDSRRLIVSAWNVADIPRMKLPPCHAFFQFYVADGKLSCQLYQRSADIFLGVPFNIASYALLTHMIAQQTGLDVGDFVWTGGDCHLYNNHFEQVETQLARTPLPLPKLHIKRKPDSIFDYRYEDFEIVGYESHPAIKAPVAV</sequence>
<dbReference type="EC" id="2.1.1.45" evidence="1"/>
<dbReference type="EMBL" id="AL646052">
    <property type="protein sequence ID" value="CAD14649.1"/>
    <property type="molecule type" value="Genomic_DNA"/>
</dbReference>
<dbReference type="RefSeq" id="WP_011000899.1">
    <property type="nucleotide sequence ID" value="NC_003295.1"/>
</dbReference>
<dbReference type="SMR" id="Q8Y0U6"/>
<dbReference type="STRING" id="267608.RSc0947"/>
<dbReference type="EnsemblBacteria" id="CAD14649">
    <property type="protein sequence ID" value="CAD14649"/>
    <property type="gene ID" value="RSc0947"/>
</dbReference>
<dbReference type="KEGG" id="rso:RSc0947"/>
<dbReference type="eggNOG" id="COG0207">
    <property type="taxonomic scope" value="Bacteria"/>
</dbReference>
<dbReference type="HOGENOM" id="CLU_021669_0_0_4"/>
<dbReference type="UniPathway" id="UPA00575"/>
<dbReference type="Proteomes" id="UP000001436">
    <property type="component" value="Chromosome"/>
</dbReference>
<dbReference type="GO" id="GO:0005829">
    <property type="term" value="C:cytosol"/>
    <property type="evidence" value="ECO:0007669"/>
    <property type="project" value="TreeGrafter"/>
</dbReference>
<dbReference type="GO" id="GO:0004799">
    <property type="term" value="F:thymidylate synthase activity"/>
    <property type="evidence" value="ECO:0007669"/>
    <property type="project" value="UniProtKB-UniRule"/>
</dbReference>
<dbReference type="GO" id="GO:0006231">
    <property type="term" value="P:dTMP biosynthetic process"/>
    <property type="evidence" value="ECO:0007669"/>
    <property type="project" value="UniProtKB-UniRule"/>
</dbReference>
<dbReference type="GO" id="GO:0006235">
    <property type="term" value="P:dTTP biosynthetic process"/>
    <property type="evidence" value="ECO:0007669"/>
    <property type="project" value="UniProtKB-UniRule"/>
</dbReference>
<dbReference type="GO" id="GO:0032259">
    <property type="term" value="P:methylation"/>
    <property type="evidence" value="ECO:0007669"/>
    <property type="project" value="UniProtKB-KW"/>
</dbReference>
<dbReference type="CDD" id="cd00351">
    <property type="entry name" value="TS_Pyrimidine_HMase"/>
    <property type="match status" value="1"/>
</dbReference>
<dbReference type="FunFam" id="3.30.572.10:FF:000001">
    <property type="entry name" value="Thymidylate synthase"/>
    <property type="match status" value="1"/>
</dbReference>
<dbReference type="Gene3D" id="3.30.572.10">
    <property type="entry name" value="Thymidylate synthase/dCMP hydroxymethylase domain"/>
    <property type="match status" value="1"/>
</dbReference>
<dbReference type="HAMAP" id="MF_00008">
    <property type="entry name" value="Thymidy_synth_bact"/>
    <property type="match status" value="1"/>
</dbReference>
<dbReference type="InterPro" id="IPR045097">
    <property type="entry name" value="Thymidate_synth/dCMP_Mease"/>
</dbReference>
<dbReference type="InterPro" id="IPR023451">
    <property type="entry name" value="Thymidate_synth/dCMP_Mease_dom"/>
</dbReference>
<dbReference type="InterPro" id="IPR036926">
    <property type="entry name" value="Thymidate_synth/dCMP_Mease_sf"/>
</dbReference>
<dbReference type="InterPro" id="IPR000398">
    <property type="entry name" value="Thymidylate_synthase"/>
</dbReference>
<dbReference type="InterPro" id="IPR020940">
    <property type="entry name" value="Thymidylate_synthase_AS"/>
</dbReference>
<dbReference type="NCBIfam" id="NF002497">
    <property type="entry name" value="PRK01827.1-3"/>
    <property type="match status" value="1"/>
</dbReference>
<dbReference type="NCBIfam" id="NF002499">
    <property type="entry name" value="PRK01827.1-5"/>
    <property type="match status" value="1"/>
</dbReference>
<dbReference type="NCBIfam" id="TIGR03284">
    <property type="entry name" value="thym_sym"/>
    <property type="match status" value="2"/>
</dbReference>
<dbReference type="PANTHER" id="PTHR11548:SF9">
    <property type="entry name" value="THYMIDYLATE SYNTHASE"/>
    <property type="match status" value="1"/>
</dbReference>
<dbReference type="PANTHER" id="PTHR11548">
    <property type="entry name" value="THYMIDYLATE SYNTHASE 1"/>
    <property type="match status" value="1"/>
</dbReference>
<dbReference type="Pfam" id="PF00303">
    <property type="entry name" value="Thymidylat_synt"/>
    <property type="match status" value="1"/>
</dbReference>
<dbReference type="PRINTS" id="PR00108">
    <property type="entry name" value="THYMDSNTHASE"/>
</dbReference>
<dbReference type="SUPFAM" id="SSF55831">
    <property type="entry name" value="Thymidylate synthase/dCMP hydroxymethylase"/>
    <property type="match status" value="1"/>
</dbReference>
<dbReference type="PROSITE" id="PS00091">
    <property type="entry name" value="THYMIDYLATE_SYNTHASE"/>
    <property type="match status" value="1"/>
</dbReference>
<name>TYSY_RALN1</name>
<protein>
    <recommendedName>
        <fullName evidence="1">Thymidylate synthase</fullName>
        <shortName evidence="1">TS</shortName>
        <shortName evidence="1">TSase</shortName>
        <ecNumber evidence="1">2.1.1.45</ecNumber>
    </recommendedName>
</protein>